<comment type="subcellular location">
    <subcellularLocation>
        <location evidence="1">Secreted</location>
        <location evidence="1">Cell wall</location>
    </subcellularLocation>
</comment>
<name>CWP24_ARATH</name>
<proteinExistence type="evidence at protein level"/>
<organism>
    <name type="scientific">Arabidopsis thaliana</name>
    <name type="common">Mouse-ear cress</name>
    <dbReference type="NCBI Taxonomy" id="3702"/>
    <lineage>
        <taxon>Eukaryota</taxon>
        <taxon>Viridiplantae</taxon>
        <taxon>Streptophyta</taxon>
        <taxon>Embryophyta</taxon>
        <taxon>Tracheophyta</taxon>
        <taxon>Spermatophyta</taxon>
        <taxon>Magnoliopsida</taxon>
        <taxon>eudicotyledons</taxon>
        <taxon>Gunneridae</taxon>
        <taxon>Pentapetalae</taxon>
        <taxon>rosids</taxon>
        <taxon>malvids</taxon>
        <taxon>Brassicales</taxon>
        <taxon>Brassicaceae</taxon>
        <taxon>Camelineae</taxon>
        <taxon>Arabidopsis</taxon>
    </lineage>
</organism>
<protein>
    <recommendedName>
        <fullName>36 kDa cell wall protein</fullName>
    </recommendedName>
</protein>
<accession>P80845</accession>
<evidence type="ECO:0000269" key="1">
    <source>
    </source>
</evidence>
<evidence type="ECO:0000303" key="2">
    <source>
    </source>
</evidence>
<evidence type="ECO:0000305" key="3"/>
<reference evidence="3" key="1">
    <citation type="journal article" date="1997" name="J. Biol. Chem.">
        <title>Differential extraction and protein sequencing reveals major differences in patterns of primary cell wall proteins from plants.</title>
        <authorList>
            <person name="Robertson D."/>
            <person name="Mitchell G.P."/>
            <person name="Gilroy J.S."/>
            <person name="Gerrish C."/>
            <person name="Bolwell G.P."/>
            <person name="Slabas A.R."/>
        </authorList>
    </citation>
    <scope>PROTEIN SEQUENCE</scope>
    <scope>SUBCELLULAR LOCATION</scope>
    <source>
        <strain>cv. Landsberg erecta</strain>
    </source>
</reference>
<feature type="chain" id="PRO_0000079702" description="36 kDa cell wall protein">
    <location>
        <begin position="1"/>
        <end position="13" status="greater than"/>
    </location>
</feature>
<feature type="non-terminal residue" evidence="2">
    <location>
        <position position="13"/>
    </location>
</feature>
<sequence length="13" mass="1620">ARKFFVGRNWPEL</sequence>
<keyword id="KW-0134">Cell wall</keyword>
<keyword id="KW-0903">Direct protein sequencing</keyword>
<keyword id="KW-0964">Secreted</keyword>
<dbReference type="GO" id="GO:0005576">
    <property type="term" value="C:extracellular region"/>
    <property type="evidence" value="ECO:0007669"/>
    <property type="project" value="UniProtKB-KW"/>
</dbReference>